<keyword id="KW-0007">Acetylation</keyword>
<keyword id="KW-0158">Chromosome</keyword>
<keyword id="KW-0903">Direct protein sequencing</keyword>
<keyword id="KW-0238">DNA-binding</keyword>
<keyword id="KW-0488">Methylation</keyword>
<keyword id="KW-0544">Nucleosome core</keyword>
<keyword id="KW-0539">Nucleus</keyword>
<keyword id="KW-1185">Reference proteome</keyword>
<protein>
    <recommendedName>
        <fullName>Histone H4</fullName>
    </recommendedName>
</protein>
<dbReference type="EMBL" id="X15634">
    <property type="protein sequence ID" value="CAA33643.1"/>
    <property type="molecule type" value="Genomic_DNA"/>
</dbReference>
<dbReference type="EMBL" id="FO081018">
    <property type="protein sequence ID" value="CCD68533.1"/>
    <property type="molecule type" value="Genomic_DNA"/>
</dbReference>
<dbReference type="EMBL" id="FO081059">
    <property type="protein sequence ID" value="CCD68871.1"/>
    <property type="molecule type" value="Genomic_DNA"/>
</dbReference>
<dbReference type="EMBL" id="FO081135">
    <property type="protein sequence ID" value="CCD69398.1"/>
    <property type="molecule type" value="Genomic_DNA"/>
</dbReference>
<dbReference type="EMBL" id="FO081223">
    <property type="protein sequence ID" value="CCD70020.1"/>
    <property type="molecule type" value="Genomic_DNA"/>
</dbReference>
<dbReference type="EMBL" id="FO081551">
    <property type="protein sequence ID" value="CCD72360.1"/>
    <property type="molecule type" value="Genomic_DNA"/>
</dbReference>
<dbReference type="EMBL" id="FO081551">
    <property type="protein sequence ID" value="CCD72370.1"/>
    <property type="molecule type" value="Genomic_DNA"/>
</dbReference>
<dbReference type="EMBL" id="FO081579">
    <property type="protein sequence ID" value="CCD72542.1"/>
    <property type="molecule type" value="Genomic_DNA"/>
</dbReference>
<dbReference type="EMBL" id="Z68336">
    <property type="protein sequence ID" value="CAA92734.1"/>
    <property type="molecule type" value="Genomic_DNA"/>
</dbReference>
<dbReference type="EMBL" id="Z70750">
    <property type="protein sequence ID" value="CAA94742.1"/>
    <property type="molecule type" value="Genomic_DNA"/>
</dbReference>
<dbReference type="EMBL" id="Z73102">
    <property type="protein sequence ID" value="CAA97407.1"/>
    <property type="molecule type" value="Genomic_DNA"/>
</dbReference>
<dbReference type="EMBL" id="Z81128">
    <property type="protein sequence ID" value="CAB03396.1"/>
    <property type="molecule type" value="Genomic_DNA"/>
</dbReference>
<dbReference type="EMBL" id="Z82271">
    <property type="protein sequence ID" value="CAB05210.1"/>
    <property type="molecule type" value="Genomic_DNA"/>
</dbReference>
<dbReference type="EMBL" id="Z83245">
    <property type="protein sequence ID" value="CAB05835.4"/>
    <property type="molecule type" value="Genomic_DNA"/>
</dbReference>
<dbReference type="EMBL" id="Z83245">
    <property type="protein sequence ID" value="CAB05837.1"/>
    <property type="molecule type" value="Genomic_DNA"/>
</dbReference>
<dbReference type="EMBL" id="Z83245">
    <property type="protein sequence ID" value="CAB05839.1"/>
    <property type="molecule type" value="Genomic_DNA"/>
</dbReference>
<dbReference type="EMBL" id="Z93388">
    <property type="protein sequence ID" value="CAB07657.1"/>
    <property type="molecule type" value="Genomic_DNA"/>
</dbReference>
<dbReference type="PIR" id="JS0314">
    <property type="entry name" value="JS0314"/>
</dbReference>
<dbReference type="PIR" id="S04240">
    <property type="entry name" value="S04240"/>
</dbReference>
<dbReference type="PIR" id="T27741">
    <property type="entry name" value="T27741"/>
</dbReference>
<dbReference type="PIR" id="T29230">
    <property type="entry name" value="T29230"/>
</dbReference>
<dbReference type="RefSeq" id="NP_492641.1">
    <property type="nucleotide sequence ID" value="NM_060240.4"/>
</dbReference>
<dbReference type="RefSeq" id="NP_496889.1">
    <property type="nucleotide sequence ID" value="NM_064488.1"/>
</dbReference>
<dbReference type="RefSeq" id="NP_496893.1">
    <property type="nucleotide sequence ID" value="NM_064492.1"/>
</dbReference>
<dbReference type="RefSeq" id="NP_496896.1">
    <property type="nucleotide sequence ID" value="NM_064495.1"/>
</dbReference>
<dbReference type="RefSeq" id="NP_501203.2">
    <property type="nucleotide sequence ID" value="NM_068802.5"/>
</dbReference>
<dbReference type="RefSeq" id="NP_501406.1">
    <property type="nucleotide sequence ID" value="NM_069005.1"/>
</dbReference>
<dbReference type="RefSeq" id="NP_502133.1">
    <property type="nucleotide sequence ID" value="NM_069732.1"/>
</dbReference>
<dbReference type="RefSeq" id="NP_502139.1">
    <property type="nucleotide sequence ID" value="NM_069738.1"/>
</dbReference>
<dbReference type="RefSeq" id="NP_502154.1">
    <property type="nucleotide sequence ID" value="NM_069753.3"/>
</dbReference>
<dbReference type="RefSeq" id="NP_505200.1">
    <property type="nucleotide sequence ID" value="NM_072799.3"/>
</dbReference>
<dbReference type="RefSeq" id="NP_505275.1">
    <property type="nucleotide sequence ID" value="NM_072874.1"/>
</dbReference>
<dbReference type="RefSeq" id="NP_505291.1">
    <property type="nucleotide sequence ID" value="NM_072890.1"/>
</dbReference>
<dbReference type="RefSeq" id="NP_505298.1">
    <property type="nucleotide sequence ID" value="NM_072897.4"/>
</dbReference>
<dbReference type="RefSeq" id="NP_505466.1">
    <property type="nucleotide sequence ID" value="NM_073065.6"/>
</dbReference>
<dbReference type="RefSeq" id="NP_507034.1">
    <property type="nucleotide sequence ID" value="NM_074633.3"/>
</dbReference>
<dbReference type="RefSeq" id="NP_509231.1">
    <property type="nucleotide sequence ID" value="NM_076830.1"/>
</dbReference>
<dbReference type="SMR" id="P62784"/>
<dbReference type="BioGRID" id="40313">
    <property type="interactions" value="1"/>
</dbReference>
<dbReference type="BioGRID" id="43149">
    <property type="interactions" value="2"/>
</dbReference>
<dbReference type="BioGRID" id="44273">
    <property type="interactions" value="1"/>
</dbReference>
<dbReference type="BioGRID" id="44379">
    <property type="interactions" value="2"/>
</dbReference>
<dbReference type="BioGRID" id="53446">
    <property type="interactions" value="48"/>
</dbReference>
<dbReference type="BioGRID" id="56168">
    <property type="interactions" value="6"/>
</dbReference>
<dbReference type="BioGRID" id="56177">
    <property type="interactions" value="1"/>
</dbReference>
<dbReference type="FunCoup" id="P62784">
    <property type="interactions" value="1640"/>
</dbReference>
<dbReference type="IntAct" id="P62784">
    <property type="interactions" value="2"/>
</dbReference>
<dbReference type="STRING" id="6239.B0035.9.1"/>
<dbReference type="iPTMnet" id="P62784"/>
<dbReference type="PaxDb" id="6239-B0035.9"/>
<dbReference type="PeptideAtlas" id="P62784"/>
<dbReference type="ABCD" id="P62784">
    <property type="antibodies" value="1 sequenced antibody"/>
</dbReference>
<dbReference type="EnsemblMetazoa" id="B0035.9.1">
    <property type="protein sequence ID" value="B0035.9.1"/>
    <property type="gene ID" value="WBGene00001920"/>
</dbReference>
<dbReference type="EnsemblMetazoa" id="C50F4.7.1">
    <property type="protein sequence ID" value="C50F4.7.1"/>
    <property type="gene ID" value="WBGene00001911"/>
</dbReference>
<dbReference type="EnsemblMetazoa" id="F07B7.9.1">
    <property type="protein sequence ID" value="F07B7.9.1"/>
    <property type="gene ID" value="WBGene00001924"/>
</dbReference>
<dbReference type="EnsemblMetazoa" id="F17E9.12.1">
    <property type="protein sequence ID" value="F17E9.12.1"/>
    <property type="gene ID" value="WBGene00001905"/>
</dbReference>
<dbReference type="EnsemblMetazoa" id="F22B3.1.1">
    <property type="protein sequence ID" value="F22B3.1.1"/>
    <property type="gene ID" value="WBGene00001938"/>
</dbReference>
<dbReference type="EnsemblMetazoa" id="F45F2.3.1">
    <property type="protein sequence ID" value="F45F2.3.1"/>
    <property type="gene ID" value="WBGene00001879"/>
</dbReference>
<dbReference type="EnsemblMetazoa" id="F54E12.3.1">
    <property type="protein sequence ID" value="F54E12.3.1"/>
    <property type="gene ID" value="WBGene00001930"/>
</dbReference>
<dbReference type="EnsemblMetazoa" id="F55G1.11.1">
    <property type="protein sequence ID" value="F55G1.11.1"/>
    <property type="gene ID" value="WBGene00001934"/>
</dbReference>
<dbReference type="EnsemblMetazoa" id="K03A1.6.1">
    <property type="protein sequence ID" value="K03A1.6.1"/>
    <property type="gene ID" value="WBGene00001912"/>
</dbReference>
<dbReference type="EnsemblMetazoa" id="K06C4.10.1">
    <property type="protein sequence ID" value="K06C4.10.1"/>
    <property type="gene ID" value="WBGene00001892"/>
</dbReference>
<dbReference type="EnsemblMetazoa" id="K06C4.2.1">
    <property type="protein sequence ID" value="K06C4.2.1"/>
    <property type="gene ID" value="WBGene00001902"/>
</dbReference>
<dbReference type="EnsemblMetazoa" id="T10C6.14.1">
    <property type="protein sequence ID" value="T10C6.14.1"/>
    <property type="gene ID" value="WBGene00001875"/>
</dbReference>
<dbReference type="EnsemblMetazoa" id="T23D8.5.1">
    <property type="protein sequence ID" value="T23D8.5.1"/>
    <property type="gene ID" value="WBGene00001941"/>
</dbReference>
<dbReference type="EnsemblMetazoa" id="ZK131.1.1">
    <property type="protein sequence ID" value="ZK131.1.1"/>
    <property type="gene ID" value="WBGene00001900"/>
</dbReference>
<dbReference type="EnsemblMetazoa" id="ZK131.4.1">
    <property type="protein sequence ID" value="ZK131.4.1"/>
    <property type="gene ID" value="WBGene00001884"/>
</dbReference>
<dbReference type="EnsemblMetazoa" id="ZK131.8.1">
    <property type="protein sequence ID" value="ZK131.8.1"/>
    <property type="gene ID" value="WBGene00001888"/>
</dbReference>
<dbReference type="GeneID" id="175027"/>
<dbReference type="GeneID" id="175032"/>
<dbReference type="GeneID" id="177522"/>
<dbReference type="GeneID" id="178050"/>
<dbReference type="GeneID" id="178055"/>
<dbReference type="GeneID" id="178066"/>
<dbReference type="GeneID" id="179233"/>
<dbReference type="GeneID" id="179260"/>
<dbReference type="GeneID" id="179264"/>
<dbReference type="GeneID" id="179267"/>
<dbReference type="GeneID" id="179341"/>
<dbReference type="GeneID" id="188792"/>
<dbReference type="GeneID" id="191667"/>
<dbReference type="GeneID" id="191671"/>
<dbReference type="GeneID" id="191677"/>
<dbReference type="GeneID" id="191680"/>
<dbReference type="KEGG" id="cel:CELE_B0035.9"/>
<dbReference type="KEGG" id="cel:CELE_C50F4.7"/>
<dbReference type="KEGG" id="cel:CELE_F07B7.9"/>
<dbReference type="KEGG" id="cel:CELE_F17E9.12"/>
<dbReference type="KEGG" id="cel:CELE_F22B3.1"/>
<dbReference type="KEGG" id="cel:CELE_F45F2.3"/>
<dbReference type="KEGG" id="cel:CELE_F54E12.3"/>
<dbReference type="KEGG" id="cel:CELE_F55G1.11"/>
<dbReference type="KEGG" id="cel:CELE_K03A1.6"/>
<dbReference type="KEGG" id="cel:CELE_K06C4.10"/>
<dbReference type="KEGG" id="cel:CELE_K06C4.2"/>
<dbReference type="KEGG" id="cel:CELE_T10C6.14"/>
<dbReference type="KEGG" id="cel:CELE_T23D8.5"/>
<dbReference type="KEGG" id="cel:CELE_ZK131.1"/>
<dbReference type="KEGG" id="cel:CELE_ZK131.4"/>
<dbReference type="KEGG" id="cel:CELE_ZK131.8"/>
<dbReference type="UCSC" id="T23D8.5">
    <property type="organism name" value="c. elegans"/>
</dbReference>
<dbReference type="AGR" id="WB:WBGene00001875"/>
<dbReference type="AGR" id="WB:WBGene00001879"/>
<dbReference type="AGR" id="WB:WBGene00001884"/>
<dbReference type="AGR" id="WB:WBGene00001888"/>
<dbReference type="AGR" id="WB:WBGene00001892"/>
<dbReference type="AGR" id="WB:WBGene00001900"/>
<dbReference type="AGR" id="WB:WBGene00001902"/>
<dbReference type="AGR" id="WB:WBGene00001905"/>
<dbReference type="AGR" id="WB:WBGene00001911"/>
<dbReference type="AGR" id="WB:WBGene00001912"/>
<dbReference type="AGR" id="WB:WBGene00001920"/>
<dbReference type="AGR" id="WB:WBGene00001924"/>
<dbReference type="AGR" id="WB:WBGene00001930"/>
<dbReference type="AGR" id="WB:WBGene00001934"/>
<dbReference type="AGR" id="WB:WBGene00001938"/>
<dbReference type="AGR" id="WB:WBGene00001941"/>
<dbReference type="CTD" id="175027"/>
<dbReference type="CTD" id="175032"/>
<dbReference type="CTD" id="177522"/>
<dbReference type="CTD" id="178050"/>
<dbReference type="CTD" id="178055"/>
<dbReference type="CTD" id="178066"/>
<dbReference type="CTD" id="179233"/>
<dbReference type="CTD" id="179260"/>
<dbReference type="CTD" id="179264"/>
<dbReference type="CTD" id="179267"/>
<dbReference type="CTD" id="179341"/>
<dbReference type="CTD" id="188792"/>
<dbReference type="CTD" id="191667"/>
<dbReference type="CTD" id="191671"/>
<dbReference type="CTD" id="191677"/>
<dbReference type="CTD" id="191680"/>
<dbReference type="WormBase" id="B0035.9">
    <property type="protein sequence ID" value="CE03252"/>
    <property type="gene ID" value="WBGene00001920"/>
    <property type="gene designation" value="his-46"/>
</dbReference>
<dbReference type="WormBase" id="C50F4.7">
    <property type="protein sequence ID" value="CE03252"/>
    <property type="gene ID" value="WBGene00001911"/>
    <property type="gene designation" value="his-37"/>
</dbReference>
<dbReference type="WormBase" id="F07B7.9">
    <property type="protein sequence ID" value="CE03252"/>
    <property type="gene ID" value="WBGene00001924"/>
    <property type="gene designation" value="his-50"/>
</dbReference>
<dbReference type="WormBase" id="F17E9.12">
    <property type="protein sequence ID" value="CE03252"/>
    <property type="gene ID" value="WBGene00001905"/>
    <property type="gene designation" value="his-31"/>
</dbReference>
<dbReference type="WormBase" id="F22B3.1">
    <property type="protein sequence ID" value="CE03252"/>
    <property type="gene ID" value="WBGene00001938"/>
    <property type="gene designation" value="his-64"/>
</dbReference>
<dbReference type="WormBase" id="F45F2.3">
    <property type="protein sequence ID" value="CE03252"/>
    <property type="gene ID" value="WBGene00001879"/>
    <property type="gene designation" value="his-5"/>
</dbReference>
<dbReference type="WormBase" id="F54E12.3">
    <property type="protein sequence ID" value="CE03252"/>
    <property type="gene ID" value="WBGene00001930"/>
    <property type="gene designation" value="his-56"/>
</dbReference>
<dbReference type="WormBase" id="F55G1.11">
    <property type="protein sequence ID" value="CE03252"/>
    <property type="gene ID" value="WBGene00001934"/>
    <property type="gene designation" value="his-60"/>
</dbReference>
<dbReference type="WormBase" id="K03A1.6">
    <property type="protein sequence ID" value="CE03252"/>
    <property type="gene ID" value="WBGene00001912"/>
    <property type="gene designation" value="his-38"/>
</dbReference>
<dbReference type="WormBase" id="K06C4.10">
    <property type="protein sequence ID" value="CE03252"/>
    <property type="gene ID" value="WBGene00001892"/>
    <property type="gene designation" value="his-18"/>
</dbReference>
<dbReference type="WormBase" id="K06C4.2">
    <property type="protein sequence ID" value="CE03252"/>
    <property type="gene ID" value="WBGene00001902"/>
    <property type="gene designation" value="his-28"/>
</dbReference>
<dbReference type="WormBase" id="T10C6.14">
    <property type="protein sequence ID" value="CE03252"/>
    <property type="gene ID" value="WBGene00001875"/>
    <property type="gene designation" value="his-1"/>
</dbReference>
<dbReference type="WormBase" id="T23D8.5">
    <property type="protein sequence ID" value="CE03252"/>
    <property type="gene ID" value="WBGene00001941"/>
    <property type="gene designation" value="his-67"/>
</dbReference>
<dbReference type="WormBase" id="ZK131.1">
    <property type="protein sequence ID" value="CE03252"/>
    <property type="gene ID" value="WBGene00001900"/>
    <property type="gene designation" value="his-26"/>
</dbReference>
<dbReference type="WormBase" id="ZK131.4">
    <property type="protein sequence ID" value="CE03252"/>
    <property type="gene ID" value="WBGene00001884"/>
    <property type="gene designation" value="his-10"/>
</dbReference>
<dbReference type="WormBase" id="ZK131.8">
    <property type="protein sequence ID" value="CE03252"/>
    <property type="gene ID" value="WBGene00001888"/>
    <property type="gene designation" value="his-14"/>
</dbReference>
<dbReference type="eggNOG" id="KOG3467">
    <property type="taxonomic scope" value="Eukaryota"/>
</dbReference>
<dbReference type="GeneTree" id="ENSGT01060000248528"/>
<dbReference type="HOGENOM" id="CLU_109117_2_3_1"/>
<dbReference type="InParanoid" id="P62784"/>
<dbReference type="OMA" id="FRTTIQI"/>
<dbReference type="OrthoDB" id="5918951at2759"/>
<dbReference type="PhylomeDB" id="P62784"/>
<dbReference type="Reactome" id="R-CEL-2299718">
    <property type="pathway name" value="Condensation of Prophase Chromosomes"/>
</dbReference>
<dbReference type="Reactome" id="R-CEL-2559580">
    <property type="pathway name" value="Oxidative Stress Induced Senescence"/>
</dbReference>
<dbReference type="Reactome" id="R-CEL-3214841">
    <property type="pathway name" value="PKMTs methylate histone lysines"/>
</dbReference>
<dbReference type="Reactome" id="R-CEL-3214842">
    <property type="pathway name" value="HDMs demethylate histones"/>
</dbReference>
<dbReference type="Reactome" id="R-CEL-3214847">
    <property type="pathway name" value="HATs acetylate histones"/>
</dbReference>
<dbReference type="Reactome" id="R-CEL-3214858">
    <property type="pathway name" value="RMTs methylate histone arginines"/>
</dbReference>
<dbReference type="Reactome" id="R-CEL-4551638">
    <property type="pathway name" value="SUMOylation of chromatin organization proteins"/>
</dbReference>
<dbReference type="Reactome" id="R-CEL-5250924">
    <property type="pathway name" value="B-WICH complex positively regulates rRNA expression"/>
</dbReference>
<dbReference type="Reactome" id="R-CEL-5578749">
    <property type="pathway name" value="Transcriptional regulation by small RNAs"/>
</dbReference>
<dbReference type="Reactome" id="R-CEL-68616">
    <property type="pathway name" value="Assembly of the ORC complex at the origin of replication"/>
</dbReference>
<dbReference type="Reactome" id="R-CEL-73772">
    <property type="pathway name" value="RNA Polymerase I Promoter Escape"/>
</dbReference>
<dbReference type="Reactome" id="R-CEL-8936459">
    <property type="pathway name" value="RUNX1 regulates genes involved in megakaryocyte differentiation and platelet function"/>
</dbReference>
<dbReference type="Reactome" id="R-CEL-9843940">
    <property type="pathway name" value="Regulation of endogenous retroelements by KRAB-ZFP proteins"/>
</dbReference>
<dbReference type="PRO" id="PR:P62784"/>
<dbReference type="Proteomes" id="UP000001940">
    <property type="component" value="Chromosome I"/>
</dbReference>
<dbReference type="Proteomes" id="UP000001940">
    <property type="component" value="Chromosome II"/>
</dbReference>
<dbReference type="Proteomes" id="UP000001940">
    <property type="component" value="Chromosome IV"/>
</dbReference>
<dbReference type="Proteomes" id="UP000001940">
    <property type="component" value="Chromosome V"/>
</dbReference>
<dbReference type="Proteomes" id="UP000001940">
    <property type="component" value="Chromosome X"/>
</dbReference>
<dbReference type="Bgee" id="WBGene00001875">
    <property type="expression patterns" value="Expressed in pharyngeal muscle cell (C elegans) and 4 other cell types or tissues"/>
</dbReference>
<dbReference type="GO" id="GO:0000786">
    <property type="term" value="C:nucleosome"/>
    <property type="evidence" value="ECO:0007669"/>
    <property type="project" value="UniProtKB-KW"/>
</dbReference>
<dbReference type="GO" id="GO:0005634">
    <property type="term" value="C:nucleus"/>
    <property type="evidence" value="ECO:0007669"/>
    <property type="project" value="UniProtKB-SubCell"/>
</dbReference>
<dbReference type="GO" id="GO:0003677">
    <property type="term" value="F:DNA binding"/>
    <property type="evidence" value="ECO:0000318"/>
    <property type="project" value="GO_Central"/>
</dbReference>
<dbReference type="GO" id="GO:0046982">
    <property type="term" value="F:protein heterodimerization activity"/>
    <property type="evidence" value="ECO:0007669"/>
    <property type="project" value="InterPro"/>
</dbReference>
<dbReference type="GO" id="GO:0030527">
    <property type="term" value="F:structural constituent of chromatin"/>
    <property type="evidence" value="ECO:0007669"/>
    <property type="project" value="InterPro"/>
</dbReference>
<dbReference type="GO" id="GO:0050829">
    <property type="term" value="P:defense response to Gram-negative bacterium"/>
    <property type="evidence" value="ECO:0000315"/>
    <property type="project" value="WormBase"/>
</dbReference>
<dbReference type="GO" id="GO:0045087">
    <property type="term" value="P:innate immune response"/>
    <property type="evidence" value="ECO:0000315"/>
    <property type="project" value="WormBase"/>
</dbReference>
<dbReference type="GO" id="GO:0006334">
    <property type="term" value="P:nucleosome assembly"/>
    <property type="evidence" value="ECO:0000318"/>
    <property type="project" value="GO_Central"/>
</dbReference>
<dbReference type="GO" id="GO:0045944">
    <property type="term" value="P:positive regulation of transcription by RNA polymerase II"/>
    <property type="evidence" value="ECO:0000315"/>
    <property type="project" value="WormBase"/>
</dbReference>
<dbReference type="CDD" id="cd22912">
    <property type="entry name" value="HFD_H4"/>
    <property type="match status" value="1"/>
</dbReference>
<dbReference type="FunFam" id="1.10.20.10:FF:000002">
    <property type="entry name" value="Histone H4"/>
    <property type="match status" value="1"/>
</dbReference>
<dbReference type="Gene3D" id="1.10.20.10">
    <property type="entry name" value="Histone, subunit A"/>
    <property type="match status" value="1"/>
</dbReference>
<dbReference type="InterPro" id="IPR035425">
    <property type="entry name" value="CENP-T/H4_C"/>
</dbReference>
<dbReference type="InterPro" id="IPR009072">
    <property type="entry name" value="Histone-fold"/>
</dbReference>
<dbReference type="InterPro" id="IPR001951">
    <property type="entry name" value="Histone_H4"/>
</dbReference>
<dbReference type="InterPro" id="IPR019809">
    <property type="entry name" value="Histone_H4_CS"/>
</dbReference>
<dbReference type="PANTHER" id="PTHR10484">
    <property type="entry name" value="HISTONE H4"/>
    <property type="match status" value="1"/>
</dbReference>
<dbReference type="Pfam" id="PF15511">
    <property type="entry name" value="CENP-T_C"/>
    <property type="match status" value="1"/>
</dbReference>
<dbReference type="PRINTS" id="PR00623">
    <property type="entry name" value="HISTONEH4"/>
</dbReference>
<dbReference type="SMART" id="SM00417">
    <property type="entry name" value="H4"/>
    <property type="match status" value="1"/>
</dbReference>
<dbReference type="SUPFAM" id="SSF47113">
    <property type="entry name" value="Histone-fold"/>
    <property type="match status" value="1"/>
</dbReference>
<dbReference type="PROSITE" id="PS00047">
    <property type="entry name" value="HISTONE_H4"/>
    <property type="match status" value="1"/>
</dbReference>
<gene>
    <name type="primary">his-1</name>
    <name type="ORF">T10C6.14</name>
</gene>
<gene>
    <name type="primary">his-5</name>
    <name type="ORF">F45F2.3</name>
</gene>
<gene>
    <name type="primary">his-10</name>
    <name type="ORF">ZK131.4</name>
</gene>
<gene>
    <name type="primary">his-14</name>
    <name type="ORF">ZK131.8</name>
</gene>
<gene>
    <name type="primary">his-18</name>
    <name type="ORF">K06C4.10</name>
</gene>
<gene>
    <name type="primary">his-26</name>
    <name type="ORF">ZK131.1</name>
</gene>
<gene>
    <name type="primary">his-28</name>
    <name type="ORF">K06C4.2</name>
</gene>
<gene>
    <name type="primary">his-31</name>
    <name type="ORF">F17E9.12</name>
</gene>
<gene>
    <name type="primary">his-37</name>
    <name type="ORF">C50F4.7</name>
</gene>
<gene>
    <name type="primary">his-38</name>
    <name type="ORF">K03A1.6</name>
</gene>
<gene>
    <name type="primary">his-46</name>
    <name type="ORF">B0035.9</name>
</gene>
<gene>
    <name type="primary">his-50</name>
    <name type="ORF">F07B7.9</name>
</gene>
<gene>
    <name type="primary">his-56</name>
    <name type="ORF">F54E12.3</name>
</gene>
<gene>
    <name type="primary">his-60</name>
    <name type="ORF">F55G1.11</name>
</gene>
<gene>
    <name type="primary">his-64</name>
    <name type="ORF">F22B3.1</name>
</gene>
<gene>
    <name type="primary">his-67</name>
    <name type="ORF">T23D8.5</name>
</gene>
<organism>
    <name type="scientific">Caenorhabditis elegans</name>
    <dbReference type="NCBI Taxonomy" id="6239"/>
    <lineage>
        <taxon>Eukaryota</taxon>
        <taxon>Metazoa</taxon>
        <taxon>Ecdysozoa</taxon>
        <taxon>Nematoda</taxon>
        <taxon>Chromadorea</taxon>
        <taxon>Rhabditida</taxon>
        <taxon>Rhabditina</taxon>
        <taxon>Rhabditomorpha</taxon>
        <taxon>Rhabditoidea</taxon>
        <taxon>Rhabditidae</taxon>
        <taxon>Peloderinae</taxon>
        <taxon>Caenorhabditis</taxon>
    </lineage>
</organism>
<feature type="initiator methionine" description="Removed" evidence="3">
    <location>
        <position position="1"/>
    </location>
</feature>
<feature type="chain" id="PRO_0000158290" description="Histone H4">
    <location>
        <begin position="2"/>
        <end position="103"/>
    </location>
</feature>
<feature type="DNA-binding region">
    <location>
        <begin position="17"/>
        <end position="21"/>
    </location>
</feature>
<feature type="region of interest" description="Disordered" evidence="2">
    <location>
        <begin position="1"/>
        <end position="20"/>
    </location>
</feature>
<feature type="compositionally biased region" description="Gly residues" evidence="2">
    <location>
        <begin position="1"/>
        <end position="14"/>
    </location>
</feature>
<feature type="modified residue" description="N-acetylserine" evidence="3">
    <location>
        <position position="2"/>
    </location>
</feature>
<feature type="modified residue" description="N6-acetyl-N6-methyllysine; alternate" evidence="1">
    <location>
        <position position="6"/>
    </location>
</feature>
<feature type="modified residue" description="N6-acetyl-N6-methyllysine; alternate" evidence="1">
    <location>
        <position position="13"/>
    </location>
</feature>
<feature type="modified residue" description="N6-acetyllysine" evidence="1">
    <location>
        <position position="17"/>
    </location>
</feature>
<feature type="modified residue" description="N6-methyllysine" evidence="3">
    <location>
        <position position="21"/>
    </location>
</feature>
<feature type="sequence conflict" description="In Ref. 3; AA sequence." evidence="4" ref="3">
    <original>G</original>
    <variation>E</variation>
    <location>
        <position position="3"/>
    </location>
</feature>
<feature type="sequence conflict" description="In Ref. 3; AA sequence." evidence="4" ref="3">
    <location>
        <position position="29"/>
    </location>
</feature>
<name>H4_CAEEL</name>
<comment type="function">
    <text>Core component of nucleosome. Nucleosomes wrap and compact DNA into chromatin, limiting DNA accessibility to the cellular machineries which require DNA as a template. Histones thereby play a central role in transcription regulation, DNA repair, DNA replication and chromosomal stability. DNA accessibility is regulated via a complex set of post-translational modifications of histones, also called histone code, and nucleosome remodeling.</text>
</comment>
<comment type="subunit">
    <text>The nucleosome is a histone octamer containing two molecules each of H2A, H2B, H3 and H4 assembled in one H3-H4 heterotetramer and two H2A-H2B heterodimers. The octamer wraps approximately 147 bp of DNA.</text>
</comment>
<comment type="subcellular location">
    <subcellularLocation>
        <location>Nucleus</location>
    </subcellularLocation>
    <subcellularLocation>
        <location>Chromosome</location>
    </subcellularLocation>
</comment>
<comment type="similarity">
    <text evidence="4">Belongs to the histone H4 family.</text>
</comment>
<evidence type="ECO:0000250" key="1">
    <source>
        <dbReference type="UniProtKB" id="P62805"/>
    </source>
</evidence>
<evidence type="ECO:0000256" key="2">
    <source>
        <dbReference type="SAM" id="MobiDB-lite"/>
    </source>
</evidence>
<evidence type="ECO:0000269" key="3">
    <source>
    </source>
</evidence>
<evidence type="ECO:0000305" key="4"/>
<accession>P62784</accession>
<accession>O02619</accession>
<accession>P02306</accession>
<accession>P18678</accession>
<accession>Q7JNV2</accession>
<proteinExistence type="evidence at protein level"/>
<reference key="1">
    <citation type="journal article" date="1989" name="J. Mol. Biol.">
        <title>Nucleotide sequences of Caenorhabditis elegans core histone genes. Genes for different histone classes share common flanking sequence elements.</title>
        <authorList>
            <person name="Roberts S.B."/>
            <person name="Emmons S.W."/>
            <person name="Childs G."/>
        </authorList>
    </citation>
    <scope>NUCLEOTIDE SEQUENCE [GENOMIC DNA]</scope>
</reference>
<reference key="2">
    <citation type="journal article" date="1998" name="Science">
        <title>Genome sequence of the nematode C. elegans: a platform for investigating biology.</title>
        <authorList>
            <consortium name="The C. elegans sequencing consortium"/>
        </authorList>
    </citation>
    <scope>NUCLEOTIDE SEQUENCE [LARGE SCALE GENOMIC DNA]</scope>
    <source>
        <strain>Bristol N2</strain>
    </source>
</reference>
<reference key="3">
    <citation type="journal article" date="1987" name="Comp. Biochem. Physiol.">
        <title>The primary structure of histone H4 from the nematode Caenorhabditis elegans.</title>
        <authorList>
            <person name="Vanfleteren J.R."/>
            <person name="van Bun S.M."/>
            <person name="van Beeumen J.J."/>
        </authorList>
    </citation>
    <scope>PROTEIN SEQUENCE OF 2-103</scope>
    <scope>ACETYLATION AT SER-2</scope>
    <scope>METHYLATION AT LYS-21</scope>
</reference>
<sequence length="103" mass="11369">MSGRGKGGKGLGKGGAKRHRKVLRDNIQGITKPAIRRLARRGGVKRISGLIYEETRGVLKVFLENVIRDAVTYCEHAKRKTVTAMDVVYALKRQGRTLYGFGG</sequence>